<name>H2Y01_CYRHA</name>
<dbReference type="EMBL" id="GU293077">
    <property type="protein sequence ID" value="ADB56893.1"/>
    <property type="molecule type" value="Genomic_DNA"/>
</dbReference>
<dbReference type="SMR" id="D2Y2K0"/>
<dbReference type="ArachnoServer" id="AS001636">
    <property type="toxin name" value="U4-theraphotoxin-Hhn1q"/>
</dbReference>
<dbReference type="GO" id="GO:0005576">
    <property type="term" value="C:extracellular region"/>
    <property type="evidence" value="ECO:0007669"/>
    <property type="project" value="UniProtKB-SubCell"/>
</dbReference>
<dbReference type="GO" id="GO:0035792">
    <property type="term" value="C:host cell postsynaptic membrane"/>
    <property type="evidence" value="ECO:0007669"/>
    <property type="project" value="UniProtKB-KW"/>
</dbReference>
<dbReference type="GO" id="GO:0090729">
    <property type="term" value="F:toxin activity"/>
    <property type="evidence" value="ECO:0007669"/>
    <property type="project" value="UniProtKB-KW"/>
</dbReference>
<dbReference type="InterPro" id="IPR012625">
    <property type="entry name" value="Hwtx-2-like"/>
</dbReference>
<dbReference type="Pfam" id="PF08089">
    <property type="entry name" value="Toxin_20"/>
    <property type="match status" value="1"/>
</dbReference>
<dbReference type="SUPFAM" id="SSF57059">
    <property type="entry name" value="omega toxin-like"/>
    <property type="match status" value="1"/>
</dbReference>
<evidence type="ECO:0000250" key="1"/>
<evidence type="ECO:0000255" key="2"/>
<evidence type="ECO:0000305" key="3"/>
<reference key="1">
    <citation type="journal article" date="2010" name="J. Proteome Res.">
        <title>Molecular diversification of peptide toxins from the tarantula Haplopelma hainanum (Ornithoctonus hainana) venom based on transcriptomic, peptidomic, and genomic analyses.</title>
        <authorList>
            <person name="Tang X."/>
            <person name="Zhang Y."/>
            <person name="Hu W."/>
            <person name="Xu D."/>
            <person name="Tao H."/>
            <person name="Yang X."/>
            <person name="Li Y."/>
            <person name="Jiang L."/>
            <person name="Liang S."/>
        </authorList>
    </citation>
    <scope>NUCLEOTIDE SEQUENCE [LARGE SCALE GENOMIC DNA]</scope>
    <source>
        <tissue>Venom gland</tissue>
    </source>
</reference>
<proteinExistence type="inferred from homology"/>
<comment type="function">
    <text evidence="1">Postsynaptic neurotoxin.</text>
</comment>
<comment type="subcellular location">
    <subcellularLocation>
        <location evidence="1">Secreted</location>
    </subcellularLocation>
</comment>
<comment type="tissue specificity">
    <text>Expressed by the venom gland.</text>
</comment>
<comment type="similarity">
    <text evidence="3">Belongs to the neurotoxin 12 (Hwtx-2) family. 02 (Hwtx-2) subfamily.</text>
</comment>
<accession>D2Y2K0</accession>
<keyword id="KW-1015">Disulfide bond</keyword>
<keyword id="KW-0528">Neurotoxin</keyword>
<keyword id="KW-0629">Postsynaptic neurotoxin</keyword>
<keyword id="KW-0964">Secreted</keyword>
<keyword id="KW-0732">Signal</keyword>
<keyword id="KW-0800">Toxin</keyword>
<organism>
    <name type="scientific">Cyriopagopus hainanus</name>
    <name type="common">Chinese bird spider</name>
    <name type="synonym">Haplopelma hainanum</name>
    <dbReference type="NCBI Taxonomy" id="209901"/>
    <lineage>
        <taxon>Eukaryota</taxon>
        <taxon>Metazoa</taxon>
        <taxon>Ecdysozoa</taxon>
        <taxon>Arthropoda</taxon>
        <taxon>Chelicerata</taxon>
        <taxon>Arachnida</taxon>
        <taxon>Araneae</taxon>
        <taxon>Mygalomorphae</taxon>
        <taxon>Theraphosidae</taxon>
        <taxon>Haplopelma</taxon>
    </lineage>
</organism>
<feature type="signal peptide" evidence="2">
    <location>
        <begin position="1"/>
        <end position="22"/>
    </location>
</feature>
<feature type="propeptide" id="PRO_0000400817" evidence="1">
    <location>
        <begin position="23"/>
        <end position="48"/>
    </location>
</feature>
<feature type="peptide" id="PRO_0000400818" description="U4-theraphotoxin-Hhn1q">
    <location>
        <begin position="49"/>
        <end position="85"/>
    </location>
</feature>
<feature type="disulfide bond" evidence="1">
    <location>
        <begin position="52"/>
        <end position="66"/>
    </location>
</feature>
<feature type="disulfide bond" evidence="1">
    <location>
        <begin position="56"/>
        <end position="77"/>
    </location>
</feature>
<feature type="disulfide bond" evidence="1">
    <location>
        <begin position="71"/>
        <end position="82"/>
    </location>
</feature>
<protein>
    <recommendedName>
        <fullName>U4-theraphotoxin-Hhn1q</fullName>
        <shortName>U4-TRTX-Hhn1q</shortName>
    </recommendedName>
    <alternativeName>
        <fullName>Hainantoxin-II-25</fullName>
        <shortName>HNTX-II-25</shortName>
    </alternativeName>
</protein>
<sequence>MKVTLIAILTCAAVLVLHTTAAEELEAESQLMEVGMPDTELAAVDEERLFECSVSCEIEKEGNKDCKKKKCRGGRKCKFNMCVKV</sequence>